<protein>
    <recommendedName>
        <fullName>GLC7-interacting protein 4</fullName>
    </recommendedName>
</protein>
<sequence length="757" mass="85401">MLAKAAASASSSMEKGSVYLDFTDIKCIQYTSSIRKLEQLVHVCKVLLRNLSMKSNENLIPLSNIVIALGSGFQFNVSAAIEKRIELLSQFRSCKANATNLPLSTTSLKLEVDLVPVEEDSVLFVSKFYNKELQSQLLTTLQRVAEDSLQIYQARIRQLTMERNSNRPTDLSGRTTIFNEDALNDLLSPNELAFGLDLLVNIRNRSTDTSSSAFFALALPILEKFRSNLNDKCIPPIRSYYTSIMKFSRTKGVFSNNVLIQLPYWQFTLHRMYAASLRAKCLIDVIRAVLRQIYIPNKHHFHDNTTKLHSKNLHEYSELLEELETFCFTQELEKDLIEAFKSYGNQNTVYQVQFNNISSAYQRLLLKSTQMLRKAAKLVDSFSTQWKSISDNMKASKYDDMNIDEMAKMAEEKLAVDELAYNEKIKEQERQREEKKNSSLSQKNTSSSSSITSNSSSLNVSPNILSPLRLSRTSSVSRSEESRSPSSPIPFTDAKSNISAKKTRSVRTRNRSSSLQSVSSLEDTSTARNGMRSNSLQSGSLNTQRIVQNAYSKALLSLNEKRGPRLTPTKLNNSIRSKSPSPTVSRQNSVKQRNKVNILKLNEVDEDDINEKFHDLKLDDDTLIVSQEVLSPEGSETPKIIVSVADDNQSSSNNDSEVEGIVKKVRFIGVPPMSQDENPEPKRRGWYKKPAVLHYPPPPAQHSLQKFRTTQEGLAFRTSLISRDQGSDKKFGFDSMYSSGQGADTKIVGKIKDKLFK</sequence>
<proteinExistence type="inferred from homology"/>
<reference key="1">
    <citation type="journal article" date="2004" name="Nature">
        <title>Genome evolution in yeasts.</title>
        <authorList>
            <person name="Dujon B."/>
            <person name="Sherman D."/>
            <person name="Fischer G."/>
            <person name="Durrens P."/>
            <person name="Casaregola S."/>
            <person name="Lafontaine I."/>
            <person name="de Montigny J."/>
            <person name="Marck C."/>
            <person name="Neuveglise C."/>
            <person name="Talla E."/>
            <person name="Goffard N."/>
            <person name="Frangeul L."/>
            <person name="Aigle M."/>
            <person name="Anthouard V."/>
            <person name="Babour A."/>
            <person name="Barbe V."/>
            <person name="Barnay S."/>
            <person name="Blanchin S."/>
            <person name="Beckerich J.-M."/>
            <person name="Beyne E."/>
            <person name="Bleykasten C."/>
            <person name="Boisrame A."/>
            <person name="Boyer J."/>
            <person name="Cattolico L."/>
            <person name="Confanioleri F."/>
            <person name="de Daruvar A."/>
            <person name="Despons L."/>
            <person name="Fabre E."/>
            <person name="Fairhead C."/>
            <person name="Ferry-Dumazet H."/>
            <person name="Groppi A."/>
            <person name="Hantraye F."/>
            <person name="Hennequin C."/>
            <person name="Jauniaux N."/>
            <person name="Joyet P."/>
            <person name="Kachouri R."/>
            <person name="Kerrest A."/>
            <person name="Koszul R."/>
            <person name="Lemaire M."/>
            <person name="Lesur I."/>
            <person name="Ma L."/>
            <person name="Muller H."/>
            <person name="Nicaud J.-M."/>
            <person name="Nikolski M."/>
            <person name="Oztas S."/>
            <person name="Ozier-Kalogeropoulos O."/>
            <person name="Pellenz S."/>
            <person name="Potier S."/>
            <person name="Richard G.-F."/>
            <person name="Straub M.-L."/>
            <person name="Suleau A."/>
            <person name="Swennen D."/>
            <person name="Tekaia F."/>
            <person name="Wesolowski-Louvel M."/>
            <person name="Westhof E."/>
            <person name="Wirth B."/>
            <person name="Zeniou-Meyer M."/>
            <person name="Zivanovic Y."/>
            <person name="Bolotin-Fukuhara M."/>
            <person name="Thierry A."/>
            <person name="Bouchier C."/>
            <person name="Caudron B."/>
            <person name="Scarpelli C."/>
            <person name="Gaillardin C."/>
            <person name="Weissenbach J."/>
            <person name="Wincker P."/>
            <person name="Souciet J.-L."/>
        </authorList>
    </citation>
    <scope>NUCLEOTIDE SEQUENCE [LARGE SCALE GENOMIC DNA]</scope>
    <source>
        <strain>ATCC 8585 / CBS 2359 / DSM 70799 / NBRC 1267 / NRRL Y-1140 / WM37</strain>
    </source>
</reference>
<name>GIP4_KLULA</name>
<dbReference type="EMBL" id="CR382126">
    <property type="protein sequence ID" value="CAG97900.1"/>
    <property type="molecule type" value="Genomic_DNA"/>
</dbReference>
<dbReference type="RefSeq" id="XP_455193.1">
    <property type="nucleotide sequence ID" value="XM_455193.1"/>
</dbReference>
<dbReference type="SMR" id="Q6CLJ6"/>
<dbReference type="FunCoup" id="Q6CLJ6">
    <property type="interactions" value="114"/>
</dbReference>
<dbReference type="PaxDb" id="284590-Q6CLJ6"/>
<dbReference type="KEGG" id="kla:KLLA0_F02497g"/>
<dbReference type="eggNOG" id="ENOG502QRIU">
    <property type="taxonomic scope" value="Eukaryota"/>
</dbReference>
<dbReference type="HOGENOM" id="CLU_021324_0_0_1"/>
<dbReference type="InParanoid" id="Q6CLJ6"/>
<dbReference type="OMA" id="WYKKPAV"/>
<dbReference type="Proteomes" id="UP000000598">
    <property type="component" value="Chromosome F"/>
</dbReference>
<dbReference type="GO" id="GO:0005737">
    <property type="term" value="C:cytoplasm"/>
    <property type="evidence" value="ECO:0007669"/>
    <property type="project" value="UniProtKB-SubCell"/>
</dbReference>
<dbReference type="GO" id="GO:0008157">
    <property type="term" value="F:protein phosphatase 1 binding"/>
    <property type="evidence" value="ECO:0007669"/>
    <property type="project" value="InterPro"/>
</dbReference>
<dbReference type="GO" id="GO:0019888">
    <property type="term" value="F:protein phosphatase regulator activity"/>
    <property type="evidence" value="ECO:0007669"/>
    <property type="project" value="InterPro"/>
</dbReference>
<dbReference type="InterPro" id="IPR026241">
    <property type="entry name" value="GIP4"/>
</dbReference>
<dbReference type="PRINTS" id="PR02082">
    <property type="entry name" value="GLC7IP4"/>
</dbReference>
<keyword id="KW-0963">Cytoplasm</keyword>
<keyword id="KW-1185">Reference proteome</keyword>
<comment type="function">
    <text evidence="1">GLC7 phosphatase-regulatory protein involved in GLC7 subcellular redistribution and chromosome segregation.</text>
</comment>
<comment type="subunit">
    <text evidence="1">Interacts with GLC7.</text>
</comment>
<comment type="subcellular location">
    <subcellularLocation>
        <location evidence="1">Cytoplasm</location>
    </subcellularLocation>
</comment>
<comment type="similarity">
    <text evidence="3">Belongs to the GIP4 family.</text>
</comment>
<organism>
    <name type="scientific">Kluyveromyces lactis (strain ATCC 8585 / CBS 2359 / DSM 70799 / NBRC 1267 / NRRL Y-1140 / WM37)</name>
    <name type="common">Yeast</name>
    <name type="synonym">Candida sphaerica</name>
    <dbReference type="NCBI Taxonomy" id="284590"/>
    <lineage>
        <taxon>Eukaryota</taxon>
        <taxon>Fungi</taxon>
        <taxon>Dikarya</taxon>
        <taxon>Ascomycota</taxon>
        <taxon>Saccharomycotina</taxon>
        <taxon>Saccharomycetes</taxon>
        <taxon>Saccharomycetales</taxon>
        <taxon>Saccharomycetaceae</taxon>
        <taxon>Kluyveromyces</taxon>
    </lineage>
</organism>
<gene>
    <name type="primary">GIP4</name>
    <name type="ordered locus">KLLA0F02497g</name>
</gene>
<accession>Q6CLJ6</accession>
<evidence type="ECO:0000250" key="1"/>
<evidence type="ECO:0000256" key="2">
    <source>
        <dbReference type="SAM" id="MobiDB-lite"/>
    </source>
</evidence>
<evidence type="ECO:0000305" key="3"/>
<feature type="chain" id="PRO_0000292484" description="GLC7-interacting protein 4">
    <location>
        <begin position="1"/>
        <end position="757"/>
    </location>
</feature>
<feature type="region of interest" description="Disordered" evidence="2">
    <location>
        <begin position="427"/>
        <end position="541"/>
    </location>
</feature>
<feature type="region of interest" description="Disordered" evidence="2">
    <location>
        <begin position="558"/>
        <end position="590"/>
    </location>
</feature>
<feature type="compositionally biased region" description="Basic and acidic residues" evidence="2">
    <location>
        <begin position="427"/>
        <end position="437"/>
    </location>
</feature>
<feature type="compositionally biased region" description="Low complexity" evidence="2">
    <location>
        <begin position="438"/>
        <end position="477"/>
    </location>
</feature>
<feature type="compositionally biased region" description="Basic residues" evidence="2">
    <location>
        <begin position="501"/>
        <end position="510"/>
    </location>
</feature>
<feature type="compositionally biased region" description="Low complexity" evidence="2">
    <location>
        <begin position="511"/>
        <end position="521"/>
    </location>
</feature>
<feature type="compositionally biased region" description="Polar residues" evidence="2">
    <location>
        <begin position="522"/>
        <end position="541"/>
    </location>
</feature>
<feature type="compositionally biased region" description="Polar residues" evidence="2">
    <location>
        <begin position="569"/>
        <end position="590"/>
    </location>
</feature>